<evidence type="ECO:0000255" key="1">
    <source>
        <dbReference type="HAMAP-Rule" id="MF_01394"/>
    </source>
</evidence>
<feature type="chain" id="PRO_0000362805" description="NAD(P)H-quinone oxidoreductase subunit 3, chloroplastic">
    <location>
        <begin position="1"/>
        <end position="120"/>
    </location>
</feature>
<feature type="transmembrane region" description="Helical" evidence="1">
    <location>
        <begin position="9"/>
        <end position="29"/>
    </location>
</feature>
<feature type="transmembrane region" description="Helical" evidence="1">
    <location>
        <begin position="64"/>
        <end position="84"/>
    </location>
</feature>
<feature type="transmembrane region" description="Helical" evidence="1">
    <location>
        <begin position="88"/>
        <end position="108"/>
    </location>
</feature>
<geneLocation type="chloroplast"/>
<name>NU3C_AGRST</name>
<proteinExistence type="inferred from homology"/>
<organism>
    <name type="scientific">Agrostis stolonifera</name>
    <name type="common">Creeping bentgrass</name>
    <dbReference type="NCBI Taxonomy" id="63632"/>
    <lineage>
        <taxon>Eukaryota</taxon>
        <taxon>Viridiplantae</taxon>
        <taxon>Streptophyta</taxon>
        <taxon>Embryophyta</taxon>
        <taxon>Tracheophyta</taxon>
        <taxon>Spermatophyta</taxon>
        <taxon>Magnoliopsida</taxon>
        <taxon>Liliopsida</taxon>
        <taxon>Poales</taxon>
        <taxon>Poaceae</taxon>
        <taxon>BOP clade</taxon>
        <taxon>Pooideae</taxon>
        <taxon>Poodae</taxon>
        <taxon>Poeae</taxon>
        <taxon>Poeae Chloroplast Group 1 (Aveneae type)</taxon>
        <taxon>Agrostidodinae</taxon>
        <taxon>Agrostidinae</taxon>
        <taxon>Agrostis</taxon>
    </lineage>
</organism>
<gene>
    <name evidence="1" type="primary">ndhC</name>
</gene>
<dbReference type="EC" id="7.1.1.-" evidence="1"/>
<dbReference type="EMBL" id="EF115543">
    <property type="protein sequence ID" value="ABK79585.1"/>
    <property type="molecule type" value="Genomic_DNA"/>
</dbReference>
<dbReference type="RefSeq" id="YP_874741.1">
    <property type="nucleotide sequence ID" value="NC_008591.1"/>
</dbReference>
<dbReference type="SMR" id="A1EA13"/>
<dbReference type="GeneID" id="4524918"/>
<dbReference type="GO" id="GO:0009535">
    <property type="term" value="C:chloroplast thylakoid membrane"/>
    <property type="evidence" value="ECO:0007669"/>
    <property type="project" value="UniProtKB-SubCell"/>
</dbReference>
<dbReference type="GO" id="GO:0030964">
    <property type="term" value="C:NADH dehydrogenase complex"/>
    <property type="evidence" value="ECO:0007669"/>
    <property type="project" value="TreeGrafter"/>
</dbReference>
<dbReference type="GO" id="GO:0008137">
    <property type="term" value="F:NADH dehydrogenase (ubiquinone) activity"/>
    <property type="evidence" value="ECO:0007669"/>
    <property type="project" value="InterPro"/>
</dbReference>
<dbReference type="GO" id="GO:0048038">
    <property type="term" value="F:quinone binding"/>
    <property type="evidence" value="ECO:0007669"/>
    <property type="project" value="UniProtKB-KW"/>
</dbReference>
<dbReference type="GO" id="GO:0019684">
    <property type="term" value="P:photosynthesis, light reaction"/>
    <property type="evidence" value="ECO:0007669"/>
    <property type="project" value="UniProtKB-UniRule"/>
</dbReference>
<dbReference type="FunFam" id="1.20.58.1610:FF:000001">
    <property type="entry name" value="NAD(P)H-quinone oxidoreductase subunit 3, chloroplastic"/>
    <property type="match status" value="1"/>
</dbReference>
<dbReference type="Gene3D" id="1.20.58.1610">
    <property type="entry name" value="NADH:ubiquinone/plastoquinone oxidoreductase, chain 3"/>
    <property type="match status" value="1"/>
</dbReference>
<dbReference type="HAMAP" id="MF_01394">
    <property type="entry name" value="NDH1_NuoA"/>
    <property type="match status" value="1"/>
</dbReference>
<dbReference type="InterPro" id="IPR023043">
    <property type="entry name" value="NAD(P)H_OxRDtase_bac/plastid"/>
</dbReference>
<dbReference type="InterPro" id="IPR000440">
    <property type="entry name" value="NADH_UbQ/plastoQ_OxRdtase_su3"/>
</dbReference>
<dbReference type="InterPro" id="IPR038430">
    <property type="entry name" value="NDAH_ubi_oxred_su3_sf"/>
</dbReference>
<dbReference type="PANTHER" id="PTHR11058">
    <property type="entry name" value="NADH-UBIQUINONE OXIDOREDUCTASE CHAIN 3"/>
    <property type="match status" value="1"/>
</dbReference>
<dbReference type="PANTHER" id="PTHR11058:SF9">
    <property type="entry name" value="NADH-UBIQUINONE OXIDOREDUCTASE CHAIN 3"/>
    <property type="match status" value="1"/>
</dbReference>
<dbReference type="Pfam" id="PF00507">
    <property type="entry name" value="Oxidored_q4"/>
    <property type="match status" value="1"/>
</dbReference>
<comment type="function">
    <text evidence="1">NDH shuttles electrons from NAD(P)H:plastoquinone, via FMN and iron-sulfur (Fe-S) centers, to quinones in the photosynthetic chain and possibly in a chloroplast respiratory chain. The immediate electron acceptor for the enzyme in this species is believed to be plastoquinone. Couples the redox reaction to proton translocation, and thus conserves the redox energy in a proton gradient.</text>
</comment>
<comment type="catalytic activity">
    <reaction evidence="1">
        <text>a plastoquinone + NADH + (n+1) H(+)(in) = a plastoquinol + NAD(+) + n H(+)(out)</text>
        <dbReference type="Rhea" id="RHEA:42608"/>
        <dbReference type="Rhea" id="RHEA-COMP:9561"/>
        <dbReference type="Rhea" id="RHEA-COMP:9562"/>
        <dbReference type="ChEBI" id="CHEBI:15378"/>
        <dbReference type="ChEBI" id="CHEBI:17757"/>
        <dbReference type="ChEBI" id="CHEBI:57540"/>
        <dbReference type="ChEBI" id="CHEBI:57945"/>
        <dbReference type="ChEBI" id="CHEBI:62192"/>
    </reaction>
</comment>
<comment type="catalytic activity">
    <reaction evidence="1">
        <text>a plastoquinone + NADPH + (n+1) H(+)(in) = a plastoquinol + NADP(+) + n H(+)(out)</text>
        <dbReference type="Rhea" id="RHEA:42612"/>
        <dbReference type="Rhea" id="RHEA-COMP:9561"/>
        <dbReference type="Rhea" id="RHEA-COMP:9562"/>
        <dbReference type="ChEBI" id="CHEBI:15378"/>
        <dbReference type="ChEBI" id="CHEBI:17757"/>
        <dbReference type="ChEBI" id="CHEBI:57783"/>
        <dbReference type="ChEBI" id="CHEBI:58349"/>
        <dbReference type="ChEBI" id="CHEBI:62192"/>
    </reaction>
</comment>
<comment type="subunit">
    <text evidence="1">NDH is composed of at least 16 different subunits, 5 of which are encoded in the nucleus.</text>
</comment>
<comment type="subcellular location">
    <subcellularLocation>
        <location evidence="1">Plastid</location>
        <location evidence="1">Chloroplast thylakoid membrane</location>
        <topology evidence="1">Multi-pass membrane protein</topology>
    </subcellularLocation>
</comment>
<comment type="similarity">
    <text evidence="1">Belongs to the complex I subunit 3 family.</text>
</comment>
<reference key="1">
    <citation type="journal article" date="2007" name="Theor. Appl. Genet.">
        <title>Complete chloroplast genome sequences of Hordeum vulgare, Sorghum bicolor and Agrostis stolonifera, and comparative analyses with other grass genomes.</title>
        <authorList>
            <person name="Saski C."/>
            <person name="Lee S.-B."/>
            <person name="Fjellheim S."/>
            <person name="Guda C."/>
            <person name="Jansen R.K."/>
            <person name="Luo H."/>
            <person name="Tomkins J."/>
            <person name="Rognli O.A."/>
            <person name="Daniell H."/>
            <person name="Clarke J.L."/>
        </authorList>
    </citation>
    <scope>NUCLEOTIDE SEQUENCE [LARGE SCALE GENOMIC DNA]</scope>
    <source>
        <strain>cv. Penn A-4</strain>
    </source>
</reference>
<keyword id="KW-0150">Chloroplast</keyword>
<keyword id="KW-0472">Membrane</keyword>
<keyword id="KW-0520">NAD</keyword>
<keyword id="KW-0521">NADP</keyword>
<keyword id="KW-0934">Plastid</keyword>
<keyword id="KW-0618">Plastoquinone</keyword>
<keyword id="KW-0874">Quinone</keyword>
<keyword id="KW-0793">Thylakoid</keyword>
<keyword id="KW-1278">Translocase</keyword>
<keyword id="KW-0812">Transmembrane</keyword>
<keyword id="KW-1133">Transmembrane helix</keyword>
<keyword id="KW-0813">Transport</keyword>
<protein>
    <recommendedName>
        <fullName evidence="1">NAD(P)H-quinone oxidoreductase subunit 3, chloroplastic</fullName>
        <ecNumber evidence="1">7.1.1.-</ecNumber>
    </recommendedName>
    <alternativeName>
        <fullName evidence="1">NAD(P)H dehydrogenase subunit 3</fullName>
    </alternativeName>
    <alternativeName>
        <fullName evidence="1">NADH-plastoquinone oxidoreductase subunit 3</fullName>
    </alternativeName>
</protein>
<sequence length="120" mass="13832">MFLLHEYDIFWTFLIIASLIPILAFWISGILAPVSEGPEKLSSYESGIEPMGGAWLQFRIRYYMFALVFVVFDVETVFLYPWAMSFDVLGVSVFIEAFIFVLILVVGLVYAWRKGALEWS</sequence>
<accession>A1EA13</accession>